<proteinExistence type="evidence at protein level"/>
<comment type="function">
    <text evidence="3 4">Hydratase involved in the degradation of sialic acids (PubMed:32542330, PubMed:32669363). Catalyzes the reversible conversion of the dehydrated form of N-acetylneuraminate (Neu5Ac), 2,7-anhydro-N-acetylneuraminate (2,7-AN), to Neu5Ac (PubMed:32542330, PubMed:32669363). Also catalyzes the irreversible conversion of 2-deoxy-2,3-didehydro-N-acetylneuraminate (2,3-EN) to Neu5Ac (PubMed:32542330). The reaction mechanism involves keto intermediates and the transient formation of NADH (PubMed:32542330).</text>
</comment>
<comment type="catalytic activity">
    <reaction evidence="3 4">
        <text>N-acetyl-2,7-anhydro-alpha-neuraminate + H2O = N-acetyl-alpha-neuraminate</text>
        <dbReference type="Rhea" id="RHEA:78519"/>
        <dbReference type="ChEBI" id="CHEBI:15377"/>
        <dbReference type="ChEBI" id="CHEBI:58770"/>
        <dbReference type="ChEBI" id="CHEBI:229228"/>
    </reaction>
</comment>
<comment type="catalytic activity">
    <reaction evidence="3">
        <text>2-deoxy-2,3-dehydro-N-acetylneuraminate + H2O = N-acetyl-alpha-neuraminate</text>
        <dbReference type="Rhea" id="RHEA:78523"/>
        <dbReference type="ChEBI" id="CHEBI:15377"/>
        <dbReference type="ChEBI" id="CHEBI:58770"/>
        <dbReference type="ChEBI" id="CHEBI:229229"/>
    </reaction>
</comment>
<comment type="cofactor">
    <cofactor evidence="2 3 4">
        <name>NAD(+)</name>
        <dbReference type="ChEBI" id="CHEBI:57540"/>
    </cofactor>
    <text evidence="2">Binds 1 NAD(+) per subunit.</text>
</comment>
<comment type="activity regulation">
    <text evidence="3">All conversions require NAD(+) as a cofactor, which is regenerated in the reaction (PubMed:32542330). The presence of EGTA and several divalent cations does not affect the activity (PubMed:32542330).</text>
</comment>
<comment type="biophysicochemical properties">
    <kinetics>
        <Vmax evidence="3">3.0 umol/min/mg enzyme with 2,7-AN as substrate</Vmax>
        <Vmax evidence="3">1.17 umol/min/mg enzyme with 2,3-EN as substrate</Vmax>
        <text evidence="3">kcat is 2.19 sec(-1) with 2,7-AN as substrate. kcat is 0.83 sec(-1) with 2,3-EN as substrate.</text>
    </kinetics>
    <phDependence>
        <text evidence="3">Optimum pH is 7.5-8.0 for 2,7-AN hydratase activity.</text>
    </phDependence>
</comment>
<comment type="subunit">
    <text evidence="2">Homodimer.</text>
</comment>
<comment type="interaction">
    <interactant intactId="EBI-542024">
        <id>P39353</id>
    </interactant>
    <interactant intactId="EBI-541886">
        <id>P30750</id>
        <label>metN</label>
    </interactant>
    <organismsDiffer>false</organismsDiffer>
    <experiments>3</experiments>
</comment>
<comment type="induction">
    <text evidence="1">Negatively regulated by the transcriptional repressor NanR. Induced by N-acetylneuraminate, via inactivation of NanR.</text>
</comment>
<comment type="disruption phenotype">
    <text evidence="3 4">Inactivation of the gene in NanR-deficient cells prevents the growth on 2,7-AN and 2,3-EN (PubMed:32542330). Deletion of the gene in strain BW25113 results in loss of growth on 2,7-AN but not on Neu5Ac (PubMed:32669363).</text>
</comment>
<comment type="miscellaneous">
    <text evidence="3 4">Bell et al. show that this hydratase allows the growth of E.coli strain BW25113 on 2,7-AN as a sole carbon source (PubMed:32669363). However, Kentache et al. show that it allows the growth of E.coli on 2,7-AN and 2,3-EN, which are produced during the degradation of sialoconjugates by sialidases from other bacteria, provided the repressor NanR has been inactivated (PubMed:32542330).</text>
</comment>
<comment type="similarity">
    <text evidence="7">Belongs to the Gfo/Idh/MocA family.</text>
</comment>
<comment type="sequence caution" evidence="6">
    <conflict type="erroneous initiation">
        <sequence resource="EMBL-CDS" id="AAA97176"/>
    </conflict>
    <text>Extended N-terminus.</text>
</comment>
<protein>
    <recommendedName>
        <fullName evidence="6">2,7-anhydro-N-acetylneuraminate hydratase</fullName>
        <ecNumber evidence="3 4">4.2.1.-</ecNumber>
    </recommendedName>
    <alternativeName>
        <fullName evidence="5">EcNanOx</fullName>
    </alternativeName>
</protein>
<name>NANY_ECOLI</name>
<reference key="1">
    <citation type="journal article" date="1995" name="Nucleic Acids Res.">
        <title>Analysis of the Escherichia coli genome VI: DNA sequence of the region from 92.8 through 100 minutes.</title>
        <authorList>
            <person name="Burland V.D."/>
            <person name="Plunkett G. III"/>
            <person name="Sofia H.J."/>
            <person name="Daniels D.L."/>
            <person name="Blattner F.R."/>
        </authorList>
    </citation>
    <scope>NUCLEOTIDE SEQUENCE [LARGE SCALE GENOMIC DNA]</scope>
    <source>
        <strain>K12 / MG1655 / ATCC 47076</strain>
    </source>
</reference>
<reference key="2">
    <citation type="journal article" date="1997" name="Science">
        <title>The complete genome sequence of Escherichia coli K-12.</title>
        <authorList>
            <person name="Blattner F.R."/>
            <person name="Plunkett G. III"/>
            <person name="Bloch C.A."/>
            <person name="Perna N.T."/>
            <person name="Burland V."/>
            <person name="Riley M."/>
            <person name="Collado-Vides J."/>
            <person name="Glasner J.D."/>
            <person name="Rode C.K."/>
            <person name="Mayhew G.F."/>
            <person name="Gregor J."/>
            <person name="Davis N.W."/>
            <person name="Kirkpatrick H.A."/>
            <person name="Goeden M.A."/>
            <person name="Rose D.J."/>
            <person name="Mau B."/>
            <person name="Shao Y."/>
        </authorList>
    </citation>
    <scope>NUCLEOTIDE SEQUENCE [LARGE SCALE GENOMIC DNA]</scope>
    <source>
        <strain>K12 / MG1655 / ATCC 47076</strain>
    </source>
</reference>
<reference key="3">
    <citation type="journal article" date="2006" name="Mol. Syst. Biol.">
        <title>Highly accurate genome sequences of Escherichia coli K-12 strains MG1655 and W3110.</title>
        <authorList>
            <person name="Hayashi K."/>
            <person name="Morooka N."/>
            <person name="Yamamoto Y."/>
            <person name="Fujita K."/>
            <person name="Isono K."/>
            <person name="Choi S."/>
            <person name="Ohtsubo E."/>
            <person name="Baba T."/>
            <person name="Wanner B.L."/>
            <person name="Mori H."/>
            <person name="Horiuchi T."/>
        </authorList>
    </citation>
    <scope>NUCLEOTIDE SEQUENCE [LARGE SCALE GENOMIC DNA]</scope>
    <source>
        <strain>K12 / W3110 / ATCC 27325 / DSM 5911</strain>
    </source>
</reference>
<reference key="4">
    <citation type="journal article" date="2013" name="J. Bacteriol.">
        <title>Control of the Escherichia coli sialoregulon by transcriptional repressor NanR.</title>
        <authorList>
            <person name="Kalivoda K.A."/>
            <person name="Steenbergen S.M."/>
            <person name="Vimr E.R."/>
        </authorList>
    </citation>
    <scope>INDUCTION</scope>
</reference>
<reference key="5">
    <citation type="journal article" date="2020" name="Biosci. Rep.">
        <title>The putative Escherichia coli dehydrogenase YjhC metabolises two dehydrated forms of N-acetylneuraminate produced by some sialidases.</title>
        <authorList>
            <person name="Kentache T."/>
            <person name="Thabault L."/>
            <person name="Peracchi A."/>
            <person name="Frederick R."/>
            <person name="Bommer G.T."/>
            <person name="Van Schaftingen E."/>
        </authorList>
    </citation>
    <scope>FUNCTION</scope>
    <scope>CATALYTIC ACTIVITY</scope>
    <scope>REACTION MECHANISM</scope>
    <scope>COFACTOR</scope>
    <scope>ACTIVITY REGULATION</scope>
    <scope>BIOPHYSICOCHEMICAL PROPERTIES</scope>
    <scope>DISRUPTION PHENOTYPE</scope>
    <source>
        <strain>K12</strain>
    </source>
</reference>
<reference key="6">
    <citation type="journal article" date="2020" name="J. Biol. Chem.">
        <title>Uncovering a novel molecular mechanism for scavenging sialic acids in bacteria.</title>
        <authorList>
            <person name="Bell A."/>
            <person name="Severi E."/>
            <person name="Lee M."/>
            <person name="Monaco S."/>
            <person name="Latousakis D."/>
            <person name="Angulo J."/>
            <person name="Thomas G.H."/>
            <person name="Naismith J.H."/>
            <person name="Juge N."/>
        </authorList>
    </citation>
    <scope>FUNCTION</scope>
    <scope>CATALYTIC ACTIVITY</scope>
    <scope>COFACTOR</scope>
    <scope>DISRUPTION PHENOTYPE</scope>
    <source>
        <strain>K12 / BW25113</strain>
    </source>
</reference>
<reference evidence="8" key="7">
    <citation type="journal article" date="2020" name="Proteins">
        <title>On the structure and function of Escherichia coli YjhC: An oxidoreductase involved in bacterial sialic acid metabolism.</title>
        <authorList>
            <person name="Horne C.R."/>
            <person name="Kind L."/>
            <person name="Davies J.S."/>
            <person name="Dobson R.C.J."/>
        </authorList>
    </citation>
    <scope>X-RAY CRYSTALLOGRAPHY (1.35 ANGSTROMS) IN COMPLEX WITH NAD(+)</scope>
    <scope>COFACTOR</scope>
    <scope>SUBUNIT</scope>
    <scope>SUBSTRATE DOCKING</scope>
</reference>
<accession>P39353</accession>
<accession>Q2M632</accession>
<keyword id="KW-0002">3D-structure</keyword>
<keyword id="KW-0456">Lyase</keyword>
<keyword id="KW-0520">NAD</keyword>
<keyword id="KW-1185">Reference proteome</keyword>
<evidence type="ECO:0000269" key="1">
    <source>
    </source>
</evidence>
<evidence type="ECO:0000269" key="2">
    <source>
    </source>
</evidence>
<evidence type="ECO:0000269" key="3">
    <source>
    </source>
</evidence>
<evidence type="ECO:0000269" key="4">
    <source>
    </source>
</evidence>
<evidence type="ECO:0000303" key="5">
    <source>
    </source>
</evidence>
<evidence type="ECO:0000305" key="6"/>
<evidence type="ECO:0000305" key="7">
    <source>
    </source>
</evidence>
<evidence type="ECO:0007744" key="8">
    <source>
        <dbReference type="PDB" id="6O15"/>
    </source>
</evidence>
<evidence type="ECO:0007829" key="9">
    <source>
        <dbReference type="PDB" id="6O15"/>
    </source>
</evidence>
<gene>
    <name evidence="5" type="primary">nanY</name>
    <name type="synonym">yjhC</name>
    <name type="ordered locus">b4280</name>
    <name type="ordered locus">JW5769</name>
</gene>
<feature type="chain" id="PRO_0000091781" description="2,7-anhydro-N-acetylneuraminate hydratase">
    <location>
        <begin position="1"/>
        <end position="372"/>
    </location>
</feature>
<feature type="binding site" evidence="2 8">
    <location>
        <position position="11"/>
    </location>
    <ligand>
        <name>NAD(+)</name>
        <dbReference type="ChEBI" id="CHEBI:57540"/>
    </ligand>
</feature>
<feature type="binding site" evidence="2 8">
    <location>
        <position position="12"/>
    </location>
    <ligand>
        <name>NAD(+)</name>
        <dbReference type="ChEBI" id="CHEBI:57540"/>
    </ligand>
</feature>
<feature type="binding site" evidence="2 8">
    <location>
        <position position="33"/>
    </location>
    <ligand>
        <name>NAD(+)</name>
        <dbReference type="ChEBI" id="CHEBI:57540"/>
    </ligand>
</feature>
<feature type="binding site" evidence="2 8">
    <location>
        <position position="36"/>
    </location>
    <ligand>
        <name>NAD(+)</name>
        <dbReference type="ChEBI" id="CHEBI:57540"/>
    </ligand>
</feature>
<feature type="binding site" evidence="2 8">
    <location>
        <position position="68"/>
    </location>
    <ligand>
        <name>NAD(+)</name>
        <dbReference type="ChEBI" id="CHEBI:57540"/>
    </ligand>
</feature>
<feature type="binding site" evidence="2 8">
    <location>
        <position position="70"/>
    </location>
    <ligand>
        <name>NAD(+)</name>
        <dbReference type="ChEBI" id="CHEBI:57540"/>
    </ligand>
</feature>
<feature type="binding site" evidence="2 8">
    <location>
        <position position="73"/>
    </location>
    <ligand>
        <name>NAD(+)</name>
        <dbReference type="ChEBI" id="CHEBI:57540"/>
    </ligand>
</feature>
<feature type="binding site" evidence="2 8">
    <location>
        <position position="90"/>
    </location>
    <ligand>
        <name>NAD(+)</name>
        <dbReference type="ChEBI" id="CHEBI:57540"/>
    </ligand>
</feature>
<feature type="binding site" evidence="2 8">
    <location>
        <position position="91"/>
    </location>
    <ligand>
        <name>NAD(+)</name>
        <dbReference type="ChEBI" id="CHEBI:57540"/>
    </ligand>
</feature>
<feature type="binding site" evidence="2 8">
    <location>
        <position position="160"/>
    </location>
    <ligand>
        <name>NAD(+)</name>
        <dbReference type="ChEBI" id="CHEBI:57540"/>
    </ligand>
</feature>
<feature type="strand" evidence="9">
    <location>
        <begin position="2"/>
        <end position="7"/>
    </location>
</feature>
<feature type="helix" evidence="9">
    <location>
        <begin position="11"/>
        <end position="20"/>
    </location>
</feature>
<feature type="strand" evidence="9">
    <location>
        <begin position="26"/>
        <end position="32"/>
    </location>
</feature>
<feature type="turn" evidence="9">
    <location>
        <begin position="34"/>
        <end position="36"/>
    </location>
</feature>
<feature type="helix" evidence="9">
    <location>
        <begin position="37"/>
        <end position="44"/>
    </location>
</feature>
<feature type="helix" evidence="9">
    <location>
        <begin position="52"/>
        <end position="56"/>
    </location>
</feature>
<feature type="strand" evidence="9">
    <location>
        <begin position="62"/>
        <end position="66"/>
    </location>
</feature>
<feature type="helix" evidence="9">
    <location>
        <begin position="70"/>
        <end position="72"/>
    </location>
</feature>
<feature type="helix" evidence="9">
    <location>
        <begin position="74"/>
        <end position="82"/>
    </location>
</feature>
<feature type="strand" evidence="9">
    <location>
        <begin position="86"/>
        <end position="93"/>
    </location>
</feature>
<feature type="helix" evidence="9">
    <location>
        <begin position="97"/>
        <end position="110"/>
    </location>
</feature>
<feature type="strand" evidence="9">
    <location>
        <begin position="114"/>
        <end position="117"/>
    </location>
</feature>
<feature type="helix" evidence="9">
    <location>
        <begin position="119"/>
        <end position="122"/>
    </location>
</feature>
<feature type="helix" evidence="9">
    <location>
        <begin position="124"/>
        <end position="135"/>
    </location>
</feature>
<feature type="turn" evidence="9">
    <location>
        <begin position="136"/>
        <end position="138"/>
    </location>
</feature>
<feature type="strand" evidence="9">
    <location>
        <begin position="140"/>
        <end position="151"/>
    </location>
</feature>
<feature type="helix" evidence="9">
    <location>
        <begin position="160"/>
        <end position="162"/>
    </location>
</feature>
<feature type="helix" evidence="9">
    <location>
        <begin position="164"/>
        <end position="167"/>
    </location>
</feature>
<feature type="helix" evidence="9">
    <location>
        <begin position="169"/>
        <end position="173"/>
    </location>
</feature>
<feature type="helix" evidence="9">
    <location>
        <begin position="176"/>
        <end position="185"/>
    </location>
</feature>
<feature type="strand" evidence="9">
    <location>
        <begin position="190"/>
        <end position="197"/>
    </location>
</feature>
<feature type="strand" evidence="9">
    <location>
        <begin position="211"/>
        <end position="218"/>
    </location>
</feature>
<feature type="strand" evidence="9">
    <location>
        <begin position="224"/>
        <end position="252"/>
    </location>
</feature>
<feature type="turn" evidence="9">
    <location>
        <begin position="253"/>
        <end position="256"/>
    </location>
</feature>
<feature type="strand" evidence="9">
    <location>
        <begin position="257"/>
        <end position="262"/>
    </location>
</feature>
<feature type="strand" evidence="9">
    <location>
        <begin position="265"/>
        <end position="269"/>
    </location>
</feature>
<feature type="strand" evidence="9">
    <location>
        <begin position="271"/>
        <end position="274"/>
    </location>
</feature>
<feature type="helix" evidence="9">
    <location>
        <begin position="275"/>
        <end position="286"/>
    </location>
</feature>
<feature type="helix" evidence="9">
    <location>
        <begin position="305"/>
        <end position="322"/>
    </location>
</feature>
<feature type="helix" evidence="9">
    <location>
        <begin position="329"/>
        <end position="334"/>
    </location>
</feature>
<feature type="helix" evidence="9">
    <location>
        <begin position="338"/>
        <end position="356"/>
    </location>
</feature>
<feature type="helix" evidence="9">
    <location>
        <begin position="362"/>
        <end position="366"/>
    </location>
</feature>
<organism>
    <name type="scientific">Escherichia coli (strain K12)</name>
    <dbReference type="NCBI Taxonomy" id="83333"/>
    <lineage>
        <taxon>Bacteria</taxon>
        <taxon>Pseudomonadati</taxon>
        <taxon>Pseudomonadota</taxon>
        <taxon>Gammaproteobacteria</taxon>
        <taxon>Enterobacterales</taxon>
        <taxon>Enterobacteriaceae</taxon>
        <taxon>Escherichia</taxon>
    </lineage>
</organism>
<dbReference type="EC" id="4.2.1.-" evidence="3 4"/>
<dbReference type="EMBL" id="U14003">
    <property type="protein sequence ID" value="AAA97176.1"/>
    <property type="status" value="ALT_INIT"/>
    <property type="molecule type" value="Genomic_DNA"/>
</dbReference>
<dbReference type="EMBL" id="U00096">
    <property type="protein sequence ID" value="AAC77236.2"/>
    <property type="molecule type" value="Genomic_DNA"/>
</dbReference>
<dbReference type="EMBL" id="AP009048">
    <property type="protein sequence ID" value="BAE78274.1"/>
    <property type="molecule type" value="Genomic_DNA"/>
</dbReference>
<dbReference type="PIR" id="S56505">
    <property type="entry name" value="S56505"/>
</dbReference>
<dbReference type="RefSeq" id="NP_418700.2">
    <property type="nucleotide sequence ID" value="NC_000913.3"/>
</dbReference>
<dbReference type="RefSeq" id="WP_000611568.1">
    <property type="nucleotide sequence ID" value="NZ_SSUV01000014.1"/>
</dbReference>
<dbReference type="PDB" id="6O15">
    <property type="method" value="X-ray"/>
    <property type="resolution" value="1.35 A"/>
    <property type="chains" value="A/B=1-372"/>
</dbReference>
<dbReference type="PDBsum" id="6O15"/>
<dbReference type="SMR" id="P39353"/>
<dbReference type="BioGRID" id="4261650">
    <property type="interactions" value="13"/>
</dbReference>
<dbReference type="BioGRID" id="853090">
    <property type="interactions" value="2"/>
</dbReference>
<dbReference type="DIP" id="DIP-12617N"/>
<dbReference type="FunCoup" id="P39353">
    <property type="interactions" value="207"/>
</dbReference>
<dbReference type="IntAct" id="P39353">
    <property type="interactions" value="2"/>
</dbReference>
<dbReference type="STRING" id="511145.b4280"/>
<dbReference type="jPOST" id="P39353"/>
<dbReference type="PaxDb" id="511145-b4280"/>
<dbReference type="EnsemblBacteria" id="AAC77236">
    <property type="protein sequence ID" value="AAC77236"/>
    <property type="gene ID" value="b4280"/>
</dbReference>
<dbReference type="GeneID" id="948808"/>
<dbReference type="KEGG" id="ecj:JW5769"/>
<dbReference type="KEGG" id="eco:b4280"/>
<dbReference type="KEGG" id="ecoc:C3026_23080"/>
<dbReference type="PATRIC" id="fig|1411691.4.peg.2423"/>
<dbReference type="EchoBASE" id="EB2433"/>
<dbReference type="eggNOG" id="COG0673">
    <property type="taxonomic scope" value="Bacteria"/>
</dbReference>
<dbReference type="HOGENOM" id="CLU_023194_16_0_6"/>
<dbReference type="InParanoid" id="P39353"/>
<dbReference type="OMA" id="IGIYCIN"/>
<dbReference type="OrthoDB" id="9801953at2"/>
<dbReference type="PhylomeDB" id="P39353"/>
<dbReference type="BioCyc" id="EcoCyc:G7901-MONOMER"/>
<dbReference type="BioCyc" id="MetaCyc:G7901-MONOMER"/>
<dbReference type="PRO" id="PR:P39353"/>
<dbReference type="Proteomes" id="UP000000625">
    <property type="component" value="Chromosome"/>
</dbReference>
<dbReference type="GO" id="GO:0016836">
    <property type="term" value="F:hydro-lyase activity"/>
    <property type="evidence" value="ECO:0000314"/>
    <property type="project" value="EcoCyc"/>
</dbReference>
<dbReference type="GO" id="GO:0000166">
    <property type="term" value="F:nucleotide binding"/>
    <property type="evidence" value="ECO:0007669"/>
    <property type="project" value="InterPro"/>
</dbReference>
<dbReference type="GO" id="GO:0042803">
    <property type="term" value="F:protein homodimerization activity"/>
    <property type="evidence" value="ECO:0000314"/>
    <property type="project" value="EcoCyc"/>
</dbReference>
<dbReference type="GO" id="GO:0006974">
    <property type="term" value="P:DNA damage response"/>
    <property type="evidence" value="ECO:0000270"/>
    <property type="project" value="EcoliWiki"/>
</dbReference>
<dbReference type="GO" id="GO:0019262">
    <property type="term" value="P:N-acetylneuraminate catabolic process"/>
    <property type="evidence" value="ECO:0000315"/>
    <property type="project" value="EcoCyc"/>
</dbReference>
<dbReference type="Gene3D" id="3.30.360.10">
    <property type="entry name" value="Dihydrodipicolinate Reductase, domain 2"/>
    <property type="match status" value="1"/>
</dbReference>
<dbReference type="Gene3D" id="3.40.50.720">
    <property type="entry name" value="NAD(P)-binding Rossmann-like Domain"/>
    <property type="match status" value="1"/>
</dbReference>
<dbReference type="InterPro" id="IPR004104">
    <property type="entry name" value="Gfo/Idh/MocA-like_OxRdtase_C"/>
</dbReference>
<dbReference type="InterPro" id="IPR000683">
    <property type="entry name" value="Gfo/Idh/MocA-like_OxRdtase_N"/>
</dbReference>
<dbReference type="InterPro" id="IPR051450">
    <property type="entry name" value="Gfo/Idh/MocA_Oxidoreductases"/>
</dbReference>
<dbReference type="InterPro" id="IPR036291">
    <property type="entry name" value="NAD(P)-bd_dom_sf"/>
</dbReference>
<dbReference type="PANTHER" id="PTHR43377">
    <property type="entry name" value="BILIVERDIN REDUCTASE A"/>
    <property type="match status" value="1"/>
</dbReference>
<dbReference type="PANTHER" id="PTHR43377:SF1">
    <property type="entry name" value="BILIVERDIN REDUCTASE A"/>
    <property type="match status" value="1"/>
</dbReference>
<dbReference type="Pfam" id="PF01408">
    <property type="entry name" value="GFO_IDH_MocA"/>
    <property type="match status" value="1"/>
</dbReference>
<dbReference type="Pfam" id="PF02894">
    <property type="entry name" value="GFO_IDH_MocA_C"/>
    <property type="match status" value="1"/>
</dbReference>
<dbReference type="SUPFAM" id="SSF55347">
    <property type="entry name" value="Glyceraldehyde-3-phosphate dehydrogenase-like, C-terminal domain"/>
    <property type="match status" value="1"/>
</dbReference>
<dbReference type="SUPFAM" id="SSF51735">
    <property type="entry name" value="NAD(P)-binding Rossmann-fold domains"/>
    <property type="match status" value="1"/>
</dbReference>
<sequence>MINYGVVGVGYFGAELARFMNMHDNAKITCVYDPENGENIARELQCINMSSLDALVSSKLVDCVIVATPNYLHKEPVIKAAKNKKHVFCEKPIALSYEDCVDMVKACKEAGVTFMAGHIMNFFNGVQYARKLIKEGVIGEILSCHTKRNGWENKQERLSWKKMKEQSGGHLYHHIHELDCVQHLLGEIPETVTMIGGNLAHSGPGFGNEDDMLFMTLEFPSGKLATLEWGSAFNWPEHYVIINGTKGSIKIDMQETAGSLRIGGQTKHFLVHETQEEDDDRRKGNMTSEMDGAIAYGHPGKKTPLWLASLIRKETLFLHNILCGAKPEEDYIDLLNGEAAMSAIATADAATLSRSQDRKVKISEIIKHTSVM</sequence>